<keyword id="KW-0997">Cell inner membrane</keyword>
<keyword id="KW-1003">Cell membrane</keyword>
<keyword id="KW-0249">Electron transport</keyword>
<keyword id="KW-0472">Membrane</keyword>
<keyword id="KW-1278">Translocase</keyword>
<keyword id="KW-0812">Transmembrane</keyword>
<keyword id="KW-1133">Transmembrane helix</keyword>
<keyword id="KW-0813">Transport</keyword>
<sequence>MTHYILLIIGTALINNFVLVKFLGLCPFMGVSKKIETAVGMGLATMFVLTVASLCAYLVDHYILIPLNATFLRTLVFILVIAVVVQFTEMAINKTSPTLYRLLGIFLPLITTNCAVLGVALLNVNLAHNLTESVVYGFGASLGFSLVLVLFAALRERLVAADIPATFRGSAIALITAGLMSLAFMGFTGLVK</sequence>
<feature type="chain" id="PRO_1000013530" description="Ion-translocating oxidoreductase complex subunit A">
    <location>
        <begin position="1"/>
        <end position="192"/>
    </location>
</feature>
<feature type="transmembrane region" description="Helical" evidence="1">
    <location>
        <begin position="5"/>
        <end position="25"/>
    </location>
</feature>
<feature type="transmembrane region" description="Helical" evidence="1">
    <location>
        <begin position="39"/>
        <end position="59"/>
    </location>
</feature>
<feature type="transmembrane region" description="Helical" evidence="1">
    <location>
        <begin position="63"/>
        <end position="83"/>
    </location>
</feature>
<feature type="transmembrane region" description="Helical" evidence="1">
    <location>
        <begin position="102"/>
        <end position="122"/>
    </location>
</feature>
<feature type="transmembrane region" description="Helical" evidence="1">
    <location>
        <begin position="134"/>
        <end position="154"/>
    </location>
</feature>
<feature type="transmembrane region" description="Helical" evidence="1">
    <location>
        <begin position="171"/>
        <end position="191"/>
    </location>
</feature>
<name>RNFA_HAEI8</name>
<organism>
    <name type="scientific">Haemophilus influenzae (strain 86-028NP)</name>
    <dbReference type="NCBI Taxonomy" id="281310"/>
    <lineage>
        <taxon>Bacteria</taxon>
        <taxon>Pseudomonadati</taxon>
        <taxon>Pseudomonadota</taxon>
        <taxon>Gammaproteobacteria</taxon>
        <taxon>Pasteurellales</taxon>
        <taxon>Pasteurellaceae</taxon>
        <taxon>Haemophilus</taxon>
    </lineage>
</organism>
<dbReference type="EC" id="7.-.-.-" evidence="1"/>
<dbReference type="EMBL" id="CP000057">
    <property type="protein sequence ID" value="AAX88739.1"/>
    <property type="molecule type" value="Genomic_DNA"/>
</dbReference>
<dbReference type="SMR" id="Q4QJQ8"/>
<dbReference type="KEGG" id="hit:NTHI1989"/>
<dbReference type="HOGENOM" id="CLU_095255_1_0_6"/>
<dbReference type="Proteomes" id="UP000002525">
    <property type="component" value="Chromosome"/>
</dbReference>
<dbReference type="GO" id="GO:0005886">
    <property type="term" value="C:plasma membrane"/>
    <property type="evidence" value="ECO:0007669"/>
    <property type="project" value="UniProtKB-SubCell"/>
</dbReference>
<dbReference type="GO" id="GO:0022900">
    <property type="term" value="P:electron transport chain"/>
    <property type="evidence" value="ECO:0007669"/>
    <property type="project" value="UniProtKB-UniRule"/>
</dbReference>
<dbReference type="HAMAP" id="MF_00459">
    <property type="entry name" value="RsxA_RnfA"/>
    <property type="match status" value="1"/>
</dbReference>
<dbReference type="InterPro" id="IPR011293">
    <property type="entry name" value="Ion_transpt_RnfA/RsxA"/>
</dbReference>
<dbReference type="InterPro" id="IPR003667">
    <property type="entry name" value="NqrDE/RnfAE"/>
</dbReference>
<dbReference type="InterPro" id="IPR050133">
    <property type="entry name" value="NqrDE/RnfAE_oxidrdctase"/>
</dbReference>
<dbReference type="NCBIfam" id="NF003481">
    <property type="entry name" value="PRK05151.1"/>
    <property type="match status" value="1"/>
</dbReference>
<dbReference type="NCBIfam" id="TIGR01943">
    <property type="entry name" value="rnfA"/>
    <property type="match status" value="1"/>
</dbReference>
<dbReference type="PANTHER" id="PTHR30335">
    <property type="entry name" value="INTEGRAL MEMBRANE PROTEIN OF SOXR-REDUCING COMPLEX"/>
    <property type="match status" value="1"/>
</dbReference>
<dbReference type="PANTHER" id="PTHR30335:SF0">
    <property type="entry name" value="ION-TRANSLOCATING OXIDOREDUCTASE COMPLEX SUBUNIT A"/>
    <property type="match status" value="1"/>
</dbReference>
<dbReference type="Pfam" id="PF02508">
    <property type="entry name" value="Rnf-Nqr"/>
    <property type="match status" value="1"/>
</dbReference>
<dbReference type="PIRSF" id="PIRSF006102">
    <property type="entry name" value="NQR_DE"/>
    <property type="match status" value="1"/>
</dbReference>
<comment type="function">
    <text evidence="1">Part of a membrane-bound complex that couples electron transfer with translocation of ions across the membrane.</text>
</comment>
<comment type="subunit">
    <text evidence="1">The complex is composed of six subunits: RnfA, RnfB, RnfC, RnfD, RnfE and RnfG.</text>
</comment>
<comment type="subcellular location">
    <subcellularLocation>
        <location evidence="1">Cell inner membrane</location>
        <topology evidence="1">Multi-pass membrane protein</topology>
    </subcellularLocation>
</comment>
<comment type="similarity">
    <text evidence="1">Belongs to the NqrDE/RnfAE family.</text>
</comment>
<accession>Q4QJQ8</accession>
<reference key="1">
    <citation type="journal article" date="2005" name="J. Bacteriol.">
        <title>Genomic sequence of an otitis media isolate of nontypeable Haemophilus influenzae: comparative study with H. influenzae serotype d, strain KW20.</title>
        <authorList>
            <person name="Harrison A."/>
            <person name="Dyer D.W."/>
            <person name="Gillaspy A."/>
            <person name="Ray W.C."/>
            <person name="Mungur R."/>
            <person name="Carson M.B."/>
            <person name="Zhong H."/>
            <person name="Gipson J."/>
            <person name="Gipson M."/>
            <person name="Johnson L.S."/>
            <person name="Lewis L."/>
            <person name="Bakaletz L.O."/>
            <person name="Munson R.S. Jr."/>
        </authorList>
    </citation>
    <scope>NUCLEOTIDE SEQUENCE [LARGE SCALE GENOMIC DNA]</scope>
    <source>
        <strain>86-028NP</strain>
    </source>
</reference>
<proteinExistence type="inferred from homology"/>
<evidence type="ECO:0000255" key="1">
    <source>
        <dbReference type="HAMAP-Rule" id="MF_00459"/>
    </source>
</evidence>
<gene>
    <name evidence="1" type="primary">rnfA</name>
    <name type="ordered locus">NTHI1989</name>
</gene>
<protein>
    <recommendedName>
        <fullName evidence="1">Ion-translocating oxidoreductase complex subunit A</fullName>
        <ecNumber evidence="1">7.-.-.-</ecNumber>
    </recommendedName>
    <alternativeName>
        <fullName evidence="1">Rnf electron transport complex subunit A</fullName>
    </alternativeName>
</protein>